<sequence>MAEKRNIFLVGPMGAGKSTIGRHLAQMLHLEFHDSDQEIESRTGADIAWVFDVEGEEGFRRREAQVIADLTEKQGIVLATGGGSVQSKDIRNYLSARGIVVYLETTIDKQVARTQRDKRRPLLQVDDPRSVLETLAESRNPLYEEIADVIVKTDDQSAKVVANQIIEQLGF</sequence>
<proteinExistence type="inferred from homology"/>
<organism>
    <name type="scientific">Shewanella amazonensis (strain ATCC BAA-1098 / SB2B)</name>
    <dbReference type="NCBI Taxonomy" id="326297"/>
    <lineage>
        <taxon>Bacteria</taxon>
        <taxon>Pseudomonadati</taxon>
        <taxon>Pseudomonadota</taxon>
        <taxon>Gammaproteobacteria</taxon>
        <taxon>Alteromonadales</taxon>
        <taxon>Shewanellaceae</taxon>
        <taxon>Shewanella</taxon>
    </lineage>
</organism>
<comment type="function">
    <text evidence="1">Catalyzes the specific phosphorylation of the 3-hydroxyl group of shikimic acid using ATP as a cosubstrate.</text>
</comment>
<comment type="catalytic activity">
    <reaction evidence="1">
        <text>shikimate + ATP = 3-phosphoshikimate + ADP + H(+)</text>
        <dbReference type="Rhea" id="RHEA:13121"/>
        <dbReference type="ChEBI" id="CHEBI:15378"/>
        <dbReference type="ChEBI" id="CHEBI:30616"/>
        <dbReference type="ChEBI" id="CHEBI:36208"/>
        <dbReference type="ChEBI" id="CHEBI:145989"/>
        <dbReference type="ChEBI" id="CHEBI:456216"/>
        <dbReference type="EC" id="2.7.1.71"/>
    </reaction>
</comment>
<comment type="cofactor">
    <cofactor evidence="1">
        <name>Mg(2+)</name>
        <dbReference type="ChEBI" id="CHEBI:18420"/>
    </cofactor>
    <text evidence="1">Binds 1 Mg(2+) ion per subunit.</text>
</comment>
<comment type="pathway">
    <text evidence="1">Metabolic intermediate biosynthesis; chorismate biosynthesis; chorismate from D-erythrose 4-phosphate and phosphoenolpyruvate: step 5/7.</text>
</comment>
<comment type="subunit">
    <text evidence="1">Monomer.</text>
</comment>
<comment type="subcellular location">
    <subcellularLocation>
        <location evidence="1">Cytoplasm</location>
    </subcellularLocation>
</comment>
<comment type="similarity">
    <text evidence="1">Belongs to the shikimate kinase family.</text>
</comment>
<keyword id="KW-0028">Amino-acid biosynthesis</keyword>
<keyword id="KW-0057">Aromatic amino acid biosynthesis</keyword>
<keyword id="KW-0067">ATP-binding</keyword>
<keyword id="KW-0963">Cytoplasm</keyword>
<keyword id="KW-0418">Kinase</keyword>
<keyword id="KW-0460">Magnesium</keyword>
<keyword id="KW-0479">Metal-binding</keyword>
<keyword id="KW-0547">Nucleotide-binding</keyword>
<keyword id="KW-1185">Reference proteome</keyword>
<keyword id="KW-0808">Transferase</keyword>
<gene>
    <name evidence="1" type="primary">aroK</name>
    <name type="ordered locus">Sama_3368</name>
</gene>
<name>AROK_SHEAM</name>
<evidence type="ECO:0000255" key="1">
    <source>
        <dbReference type="HAMAP-Rule" id="MF_00109"/>
    </source>
</evidence>
<accession>A1SB14</accession>
<reference key="1">
    <citation type="submission" date="2006-12" db="EMBL/GenBank/DDBJ databases">
        <title>Complete sequence of Shewanella amazonensis SB2B.</title>
        <authorList>
            <consortium name="US DOE Joint Genome Institute"/>
            <person name="Copeland A."/>
            <person name="Lucas S."/>
            <person name="Lapidus A."/>
            <person name="Barry K."/>
            <person name="Detter J.C."/>
            <person name="Glavina del Rio T."/>
            <person name="Hammon N."/>
            <person name="Israni S."/>
            <person name="Dalin E."/>
            <person name="Tice H."/>
            <person name="Pitluck S."/>
            <person name="Munk A.C."/>
            <person name="Brettin T."/>
            <person name="Bruce D."/>
            <person name="Han C."/>
            <person name="Tapia R."/>
            <person name="Gilna P."/>
            <person name="Schmutz J."/>
            <person name="Larimer F."/>
            <person name="Land M."/>
            <person name="Hauser L."/>
            <person name="Kyrpides N."/>
            <person name="Mikhailova N."/>
            <person name="Fredrickson J."/>
            <person name="Richardson P."/>
        </authorList>
    </citation>
    <scope>NUCLEOTIDE SEQUENCE [LARGE SCALE GENOMIC DNA]</scope>
    <source>
        <strain>ATCC BAA-1098 / SB2B</strain>
    </source>
</reference>
<feature type="chain" id="PRO_1000022992" description="Shikimate kinase">
    <location>
        <begin position="1"/>
        <end position="171"/>
    </location>
</feature>
<feature type="binding site" evidence="1">
    <location>
        <begin position="14"/>
        <end position="19"/>
    </location>
    <ligand>
        <name>ATP</name>
        <dbReference type="ChEBI" id="CHEBI:30616"/>
    </ligand>
</feature>
<feature type="binding site" evidence="1">
    <location>
        <position position="18"/>
    </location>
    <ligand>
        <name>Mg(2+)</name>
        <dbReference type="ChEBI" id="CHEBI:18420"/>
    </ligand>
</feature>
<feature type="binding site" evidence="1">
    <location>
        <position position="36"/>
    </location>
    <ligand>
        <name>substrate</name>
    </ligand>
</feature>
<feature type="binding site" evidence="1">
    <location>
        <position position="60"/>
    </location>
    <ligand>
        <name>substrate</name>
    </ligand>
</feature>
<feature type="binding site" evidence="1">
    <location>
        <position position="82"/>
    </location>
    <ligand>
        <name>substrate</name>
    </ligand>
</feature>
<feature type="binding site" evidence="1">
    <location>
        <position position="120"/>
    </location>
    <ligand>
        <name>ATP</name>
        <dbReference type="ChEBI" id="CHEBI:30616"/>
    </ligand>
</feature>
<feature type="binding site" evidence="1">
    <location>
        <position position="139"/>
    </location>
    <ligand>
        <name>substrate</name>
    </ligand>
</feature>
<feature type="binding site" evidence="1">
    <location>
        <position position="156"/>
    </location>
    <ligand>
        <name>ATP</name>
        <dbReference type="ChEBI" id="CHEBI:30616"/>
    </ligand>
</feature>
<dbReference type="EC" id="2.7.1.71" evidence="1"/>
<dbReference type="EMBL" id="CP000507">
    <property type="protein sequence ID" value="ABM01571.1"/>
    <property type="molecule type" value="Genomic_DNA"/>
</dbReference>
<dbReference type="RefSeq" id="WP_011761475.1">
    <property type="nucleotide sequence ID" value="NC_008700.1"/>
</dbReference>
<dbReference type="SMR" id="A1SB14"/>
<dbReference type="STRING" id="326297.Sama_3368"/>
<dbReference type="KEGG" id="saz:Sama_3368"/>
<dbReference type="eggNOG" id="COG0703">
    <property type="taxonomic scope" value="Bacteria"/>
</dbReference>
<dbReference type="HOGENOM" id="CLU_057607_2_2_6"/>
<dbReference type="OrthoDB" id="9800332at2"/>
<dbReference type="UniPathway" id="UPA00053">
    <property type="reaction ID" value="UER00088"/>
</dbReference>
<dbReference type="Proteomes" id="UP000009175">
    <property type="component" value="Chromosome"/>
</dbReference>
<dbReference type="GO" id="GO:0005829">
    <property type="term" value="C:cytosol"/>
    <property type="evidence" value="ECO:0007669"/>
    <property type="project" value="TreeGrafter"/>
</dbReference>
<dbReference type="GO" id="GO:0005524">
    <property type="term" value="F:ATP binding"/>
    <property type="evidence" value="ECO:0007669"/>
    <property type="project" value="UniProtKB-UniRule"/>
</dbReference>
<dbReference type="GO" id="GO:0000287">
    <property type="term" value="F:magnesium ion binding"/>
    <property type="evidence" value="ECO:0007669"/>
    <property type="project" value="UniProtKB-UniRule"/>
</dbReference>
<dbReference type="GO" id="GO:0004765">
    <property type="term" value="F:shikimate kinase activity"/>
    <property type="evidence" value="ECO:0007669"/>
    <property type="project" value="UniProtKB-UniRule"/>
</dbReference>
<dbReference type="GO" id="GO:0008652">
    <property type="term" value="P:amino acid biosynthetic process"/>
    <property type="evidence" value="ECO:0007669"/>
    <property type="project" value="UniProtKB-KW"/>
</dbReference>
<dbReference type="GO" id="GO:0009073">
    <property type="term" value="P:aromatic amino acid family biosynthetic process"/>
    <property type="evidence" value="ECO:0007669"/>
    <property type="project" value="UniProtKB-KW"/>
</dbReference>
<dbReference type="GO" id="GO:0009423">
    <property type="term" value="P:chorismate biosynthetic process"/>
    <property type="evidence" value="ECO:0007669"/>
    <property type="project" value="UniProtKB-UniRule"/>
</dbReference>
<dbReference type="CDD" id="cd00464">
    <property type="entry name" value="SK"/>
    <property type="match status" value="1"/>
</dbReference>
<dbReference type="FunFam" id="3.40.50.300:FF:000099">
    <property type="entry name" value="Shikimate kinase 1"/>
    <property type="match status" value="1"/>
</dbReference>
<dbReference type="Gene3D" id="3.40.50.300">
    <property type="entry name" value="P-loop containing nucleotide triphosphate hydrolases"/>
    <property type="match status" value="1"/>
</dbReference>
<dbReference type="HAMAP" id="MF_00109">
    <property type="entry name" value="Shikimate_kinase"/>
    <property type="match status" value="1"/>
</dbReference>
<dbReference type="InterPro" id="IPR027417">
    <property type="entry name" value="P-loop_NTPase"/>
</dbReference>
<dbReference type="InterPro" id="IPR031322">
    <property type="entry name" value="Shikimate/glucono_kinase"/>
</dbReference>
<dbReference type="InterPro" id="IPR000623">
    <property type="entry name" value="Shikimate_kinase/TSH1"/>
</dbReference>
<dbReference type="InterPro" id="IPR023000">
    <property type="entry name" value="Shikimate_kinase_CS"/>
</dbReference>
<dbReference type="NCBIfam" id="NF003456">
    <property type="entry name" value="PRK05057.1"/>
    <property type="match status" value="1"/>
</dbReference>
<dbReference type="PANTHER" id="PTHR21087">
    <property type="entry name" value="SHIKIMATE KINASE"/>
    <property type="match status" value="1"/>
</dbReference>
<dbReference type="PANTHER" id="PTHR21087:SF16">
    <property type="entry name" value="SHIKIMATE KINASE 1, CHLOROPLASTIC"/>
    <property type="match status" value="1"/>
</dbReference>
<dbReference type="Pfam" id="PF01202">
    <property type="entry name" value="SKI"/>
    <property type="match status" value="1"/>
</dbReference>
<dbReference type="PRINTS" id="PR01100">
    <property type="entry name" value="SHIKIMTKNASE"/>
</dbReference>
<dbReference type="SUPFAM" id="SSF52540">
    <property type="entry name" value="P-loop containing nucleoside triphosphate hydrolases"/>
    <property type="match status" value="1"/>
</dbReference>
<dbReference type="PROSITE" id="PS01128">
    <property type="entry name" value="SHIKIMATE_KINASE"/>
    <property type="match status" value="1"/>
</dbReference>
<protein>
    <recommendedName>
        <fullName evidence="1">Shikimate kinase</fullName>
        <shortName evidence="1">SK</shortName>
        <ecNumber evidence="1">2.7.1.71</ecNumber>
    </recommendedName>
</protein>